<evidence type="ECO:0000250" key="1"/>
<evidence type="ECO:0000255" key="2"/>
<evidence type="ECO:0000256" key="3">
    <source>
        <dbReference type="SAM" id="MobiDB-lite"/>
    </source>
</evidence>
<evidence type="ECO:0000305" key="4"/>
<gene>
    <name type="primary">PX</name>
</gene>
<organism>
    <name type="scientific">Fowl adenovirus A serotype 1 (strain CELO / Phelps)</name>
    <name type="common">FAdV-1</name>
    <name type="synonym">Avian adenovirus gal1 (strain Phelps)</name>
    <dbReference type="NCBI Taxonomy" id="10553"/>
    <lineage>
        <taxon>Viruses</taxon>
        <taxon>Varidnaviria</taxon>
        <taxon>Bamfordvirae</taxon>
        <taxon>Preplasmiviricota</taxon>
        <taxon>Tectiliviricetes</taxon>
        <taxon>Rowavirales</taxon>
        <taxon>Adenoviridae</taxon>
        <taxon>Aviadenovirus</taxon>
        <taxon>Fowl aviadenovirus A</taxon>
    </lineage>
</organism>
<keyword id="KW-0238">DNA-binding</keyword>
<keyword id="KW-0426">Late protein</keyword>
<keyword id="KW-1185">Reference proteome</keyword>
<keyword id="KW-0946">Virion</keyword>
<organismHost>
    <name type="scientific">Galliformes</name>
    <dbReference type="NCBI Taxonomy" id="8976"/>
</organismHost>
<accession>Q64756</accession>
<name>L2MU_ADEG1</name>
<proteinExistence type="inferred from homology"/>
<dbReference type="EMBL" id="Z67970">
    <property type="protein sequence ID" value="CAA91904.1"/>
    <property type="molecule type" value="Genomic_DNA"/>
</dbReference>
<dbReference type="EMBL" id="U46933">
    <property type="protein sequence ID" value="AAC54910.1"/>
    <property type="molecule type" value="Genomic_DNA"/>
</dbReference>
<dbReference type="SMR" id="Q64756"/>
<dbReference type="Proteomes" id="UP000001594">
    <property type="component" value="Segment"/>
</dbReference>
<dbReference type="GO" id="GO:0019013">
    <property type="term" value="C:viral nucleocapsid"/>
    <property type="evidence" value="ECO:0007669"/>
    <property type="project" value="InterPro"/>
</dbReference>
<dbReference type="GO" id="GO:0003677">
    <property type="term" value="F:DNA binding"/>
    <property type="evidence" value="ECO:0007669"/>
    <property type="project" value="UniProtKB-KW"/>
</dbReference>
<dbReference type="InterPro" id="IPR008393">
    <property type="entry name" value="Adenovirus_late_L2_mu_core"/>
</dbReference>
<dbReference type="Pfam" id="PF05829">
    <property type="entry name" value="Adeno_PX"/>
    <property type="match status" value="1"/>
</dbReference>
<reference key="1">
    <citation type="journal article" date="1996" name="Arch. Virol.">
        <title>Genes for fowl adenovirus CELO penton base and core polypeptides.</title>
        <authorList>
            <person name="Akopian T.A."/>
            <person name="Lazareva S.E."/>
            <person name="Tikhomirov E.E."/>
            <person name="Karpov V.A."/>
            <person name="Naroditsky B.S."/>
        </authorList>
    </citation>
    <scope>NUCLEOTIDE SEQUENCE [GENOMIC DNA]</scope>
</reference>
<reference key="2">
    <citation type="journal article" date="1996" name="J. Virol.">
        <title>The complete DNA sequence and genomic organization of the avian adenovirus CELO.</title>
        <authorList>
            <person name="Chiocca S."/>
            <person name="Kurzbauer R."/>
            <person name="Schaffner G."/>
            <person name="Baker A."/>
            <person name="Mautner V."/>
            <person name="Cotten M."/>
        </authorList>
    </citation>
    <scope>NUCLEOTIDE SEQUENCE [LARGE SCALE GENOMIC DNA]</scope>
</reference>
<sequence length="188" mass="19789">MCAVAIHRSDVVMPSVLLTGGRTAKGKKRASRRRVKVPKLPKGARRKRASVTPVPTVATATASERAALTNLARRLQRGDYAAWRPADYTSPAVSEAARAAASSGTPATARDLATGTLARAVPMTGTGGRRRKRTATRRRSLKGGFLPALIPIIAAAIGAIPGIAGTAVGIANLKEQQRQFNKIYGDKK</sequence>
<comment type="function">
    <text evidence="1">The role of the precursor might be to condense the viral prochromatin for encapsidation by virtue of the two basic domains.</text>
</comment>
<comment type="subcellular location">
    <subcellularLocation>
        <location evidence="4">Virion</location>
    </subcellularLocation>
</comment>
<comment type="similarity">
    <text evidence="4">Belongs to the adenoviridae pX family.</text>
</comment>
<protein>
    <recommendedName>
        <fullName>Late L2 mu core protein</fullName>
    </recommendedName>
    <alternativeName>
        <fullName>Protein X</fullName>
        <shortName>pX</shortName>
    </alternativeName>
    <alternativeName>
        <fullName>pMu</fullName>
    </alternativeName>
</protein>
<feature type="propeptide" id="PRO_0000036537" evidence="2">
    <location>
        <begin position="1"/>
        <end position="128"/>
    </location>
</feature>
<feature type="peptide" id="PRO_0000036538" description="Late L2 mu core protein">
    <location>
        <begin position="129"/>
        <end position="144"/>
    </location>
</feature>
<feature type="propeptide" id="PRO_0000036539" evidence="2">
    <location>
        <begin position="145"/>
        <end position="188"/>
    </location>
</feature>
<feature type="region of interest" description="Disordered" evidence="3">
    <location>
        <begin position="22"/>
        <end position="52"/>
    </location>
</feature>
<feature type="compositionally biased region" description="Basic residues" evidence="3">
    <location>
        <begin position="24"/>
        <end position="49"/>
    </location>
</feature>
<feature type="site" description="Cleavage; by adenovirus protease" evidence="2">
    <location>
        <begin position="14"/>
        <end position="15"/>
    </location>
</feature>
<feature type="site" description="Cleavage; by adenovirus protease" evidence="2">
    <location>
        <begin position="144"/>
        <end position="145"/>
    </location>
</feature>